<dbReference type="EMBL" id="CP001389">
    <property type="protein sequence ID" value="ACP27398.1"/>
    <property type="molecule type" value="Genomic_DNA"/>
</dbReference>
<dbReference type="RefSeq" id="WP_012710140.1">
    <property type="nucleotide sequence ID" value="NC_012587.1"/>
</dbReference>
<dbReference type="RefSeq" id="YP_002828151.1">
    <property type="nucleotide sequence ID" value="NC_012587.1"/>
</dbReference>
<dbReference type="SMR" id="C3MCV0"/>
<dbReference type="STRING" id="394.NGR_c36770"/>
<dbReference type="KEGG" id="rhi:NGR_c36770"/>
<dbReference type="PATRIC" id="fig|394.7.peg.6530"/>
<dbReference type="eggNOG" id="COG0792">
    <property type="taxonomic scope" value="Bacteria"/>
</dbReference>
<dbReference type="HOGENOM" id="CLU_115353_0_2_5"/>
<dbReference type="OrthoDB" id="9812968at2"/>
<dbReference type="Proteomes" id="UP000001054">
    <property type="component" value="Chromosome"/>
</dbReference>
<dbReference type="GO" id="GO:0003676">
    <property type="term" value="F:nucleic acid binding"/>
    <property type="evidence" value="ECO:0007669"/>
    <property type="project" value="InterPro"/>
</dbReference>
<dbReference type="Gene3D" id="3.40.1350.10">
    <property type="match status" value="1"/>
</dbReference>
<dbReference type="HAMAP" id="MF_00048">
    <property type="entry name" value="UPF0102"/>
    <property type="match status" value="1"/>
</dbReference>
<dbReference type="InterPro" id="IPR011335">
    <property type="entry name" value="Restrct_endonuc-II-like"/>
</dbReference>
<dbReference type="InterPro" id="IPR011856">
    <property type="entry name" value="tRNA_endonuc-like_dom_sf"/>
</dbReference>
<dbReference type="InterPro" id="IPR003509">
    <property type="entry name" value="UPF0102_YraN-like"/>
</dbReference>
<dbReference type="NCBIfam" id="NF009151">
    <property type="entry name" value="PRK12497.1-5"/>
    <property type="match status" value="1"/>
</dbReference>
<dbReference type="PANTHER" id="PTHR34039">
    <property type="entry name" value="UPF0102 PROTEIN YRAN"/>
    <property type="match status" value="1"/>
</dbReference>
<dbReference type="PANTHER" id="PTHR34039:SF1">
    <property type="entry name" value="UPF0102 PROTEIN YRAN"/>
    <property type="match status" value="1"/>
</dbReference>
<dbReference type="Pfam" id="PF02021">
    <property type="entry name" value="UPF0102"/>
    <property type="match status" value="1"/>
</dbReference>
<dbReference type="SUPFAM" id="SSF52980">
    <property type="entry name" value="Restriction endonuclease-like"/>
    <property type="match status" value="1"/>
</dbReference>
<feature type="chain" id="PRO_1000200157" description="UPF0102 protein NGR_c36770">
    <location>
        <begin position="1"/>
        <end position="122"/>
    </location>
</feature>
<accession>C3MCV0</accession>
<sequence length="122" mass="13997">MKAERPDGRKLRALKRGHLAEYRAALCLIVKGYRIVAMRYRTKLGEIDIIARRGDLIACVEVKARASFDGAVFAVSDTAQRRIRAASDVWLSRQADFHCLSVRYDIVAVMPWRWPRHLPDAF</sequence>
<proteinExistence type="inferred from homology"/>
<evidence type="ECO:0000255" key="1">
    <source>
        <dbReference type="HAMAP-Rule" id="MF_00048"/>
    </source>
</evidence>
<keyword id="KW-1185">Reference proteome</keyword>
<organism>
    <name type="scientific">Sinorhizobium fredii (strain NBRC 101917 / NGR234)</name>
    <dbReference type="NCBI Taxonomy" id="394"/>
    <lineage>
        <taxon>Bacteria</taxon>
        <taxon>Pseudomonadati</taxon>
        <taxon>Pseudomonadota</taxon>
        <taxon>Alphaproteobacteria</taxon>
        <taxon>Hyphomicrobiales</taxon>
        <taxon>Rhizobiaceae</taxon>
        <taxon>Sinorhizobium/Ensifer group</taxon>
        <taxon>Sinorhizobium</taxon>
    </lineage>
</organism>
<comment type="similarity">
    <text evidence="1">Belongs to the UPF0102 family.</text>
</comment>
<protein>
    <recommendedName>
        <fullName evidence="1">UPF0102 protein NGR_c36770</fullName>
    </recommendedName>
</protein>
<name>Y3677_SINFN</name>
<reference key="1">
    <citation type="journal article" date="2009" name="Appl. Environ. Microbiol.">
        <title>Rhizobium sp. strain NGR234 possesses a remarkable number of secretion systems.</title>
        <authorList>
            <person name="Schmeisser C."/>
            <person name="Liesegang H."/>
            <person name="Krysciak D."/>
            <person name="Bakkou N."/>
            <person name="Le Quere A."/>
            <person name="Wollherr A."/>
            <person name="Heinemeyer I."/>
            <person name="Morgenstern B."/>
            <person name="Pommerening-Roeser A."/>
            <person name="Flores M."/>
            <person name="Palacios R."/>
            <person name="Brenner S."/>
            <person name="Gottschalk G."/>
            <person name="Schmitz R.A."/>
            <person name="Broughton W.J."/>
            <person name="Perret X."/>
            <person name="Strittmatter A.W."/>
            <person name="Streit W.R."/>
        </authorList>
    </citation>
    <scope>NUCLEOTIDE SEQUENCE [LARGE SCALE GENOMIC DNA]</scope>
    <source>
        <strain>NBRC 101917 / NGR234</strain>
    </source>
</reference>
<gene>
    <name type="ordered locus">NGR_c36770</name>
</gene>